<evidence type="ECO:0000250" key="1"/>
<evidence type="ECO:0000255" key="2"/>
<evidence type="ECO:0000305" key="3"/>
<protein>
    <recommendedName>
        <fullName>DNA mismatch repair protein MutS</fullName>
    </recommendedName>
</protein>
<name>MUTS_THEMA</name>
<reference key="1">
    <citation type="submission" date="1996-10" db="EMBL/GenBank/DDBJ databases">
        <title>Hyperthermophilic MutS proteins: isolation, characterization and enhancement of PCR specificity.</title>
        <authorList>
            <person name="Wetmur J.G."/>
            <person name="Rosenfeld A."/>
            <person name="Wong D.M."/>
        </authorList>
    </citation>
    <scope>NUCLEOTIDE SEQUENCE [GENOMIC DNA]</scope>
</reference>
<reference key="2">
    <citation type="journal article" date="1999" name="Nature">
        <title>Evidence for lateral gene transfer between Archaea and Bacteria from genome sequence of Thermotoga maritima.</title>
        <authorList>
            <person name="Nelson K.E."/>
            <person name="Clayton R.A."/>
            <person name="Gill S.R."/>
            <person name="Gwinn M.L."/>
            <person name="Dodson R.J."/>
            <person name="Haft D.H."/>
            <person name="Hickey E.K."/>
            <person name="Peterson J.D."/>
            <person name="Nelson W.C."/>
            <person name="Ketchum K.A."/>
            <person name="McDonald L.A."/>
            <person name="Utterback T.R."/>
            <person name="Malek J.A."/>
            <person name="Linher K.D."/>
            <person name="Garrett M.M."/>
            <person name="Stewart A.M."/>
            <person name="Cotton M.D."/>
            <person name="Pratt M.S."/>
            <person name="Phillips C.A."/>
            <person name="Richardson D.L."/>
            <person name="Heidelberg J.F."/>
            <person name="Sutton G.G."/>
            <person name="Fleischmann R.D."/>
            <person name="Eisen J.A."/>
            <person name="White O."/>
            <person name="Salzberg S.L."/>
            <person name="Smith H.O."/>
            <person name="Venter J.C."/>
            <person name="Fraser C.M."/>
        </authorList>
    </citation>
    <scope>NUCLEOTIDE SEQUENCE [LARGE SCALE GENOMIC DNA]</scope>
    <source>
        <strain>ATCC 43589 / DSM 3109 / JCM 10099 / NBRC 100826 / MSB8</strain>
    </source>
</reference>
<comment type="function">
    <text evidence="1">This protein is involved in the repair of mismatches in DNA. It is possible that it carries out the mismatch recognition step. This protein has a weak ATPase activity (By similarity).</text>
</comment>
<comment type="similarity">
    <text evidence="3">Belongs to the DNA mismatch repair MutS family.</text>
</comment>
<accession>P74926</accession>
<feature type="chain" id="PRO_0000115158" description="DNA mismatch repair protein MutS">
    <location>
        <begin position="1"/>
        <end position="793"/>
    </location>
</feature>
<feature type="binding site" evidence="2">
    <location>
        <begin position="589"/>
        <end position="596"/>
    </location>
    <ligand>
        <name>ATP</name>
        <dbReference type="ChEBI" id="CHEBI:30616"/>
    </ligand>
</feature>
<feature type="sequence conflict" description="In Ref. 1; AAB16999." evidence="3" ref="1">
    <original>A</original>
    <variation>G</variation>
    <location>
        <position position="233"/>
    </location>
</feature>
<feature type="sequence conflict" description="In Ref. 1; AAB16999." evidence="3" ref="1">
    <original>L</original>
    <variation>W</variation>
    <location>
        <position position="262"/>
    </location>
</feature>
<feature type="sequence conflict" description="In Ref. 1; AAB16999." evidence="3" ref="1">
    <original>L</original>
    <variation>G</variation>
    <location>
        <position position="287"/>
    </location>
</feature>
<feature type="sequence conflict" description="In Ref. 1; AAB16999." evidence="3" ref="1">
    <original>K</original>
    <variation>T</variation>
    <location>
        <position position="506"/>
    </location>
</feature>
<dbReference type="EMBL" id="U71155">
    <property type="protein sequence ID" value="AAB16999.1"/>
    <property type="molecule type" value="Genomic_DNA"/>
</dbReference>
<dbReference type="EMBL" id="AE000512">
    <property type="protein sequence ID" value="AAD36785.1"/>
    <property type="molecule type" value="Genomic_DNA"/>
</dbReference>
<dbReference type="PIR" id="C72219">
    <property type="entry name" value="C72219"/>
</dbReference>
<dbReference type="RefSeq" id="NP_229518.1">
    <property type="nucleotide sequence ID" value="NC_000853.1"/>
</dbReference>
<dbReference type="RefSeq" id="WP_004082235.1">
    <property type="nucleotide sequence ID" value="NC_000853.1"/>
</dbReference>
<dbReference type="SMR" id="P74926"/>
<dbReference type="FunCoup" id="P74926">
    <property type="interactions" value="320"/>
</dbReference>
<dbReference type="STRING" id="243274.TM_1719"/>
<dbReference type="PaxDb" id="243274-THEMA_05645"/>
<dbReference type="EnsemblBacteria" id="AAD36785">
    <property type="protein sequence ID" value="AAD36785"/>
    <property type="gene ID" value="TM_1719"/>
</dbReference>
<dbReference type="KEGG" id="tma:TM1719"/>
<dbReference type="KEGG" id="tmi:THEMA_05645"/>
<dbReference type="KEGG" id="tmm:Tmari_1727"/>
<dbReference type="KEGG" id="tmw:THMA_1761"/>
<dbReference type="eggNOG" id="COG0249">
    <property type="taxonomic scope" value="Bacteria"/>
</dbReference>
<dbReference type="InParanoid" id="P74926"/>
<dbReference type="OrthoDB" id="9802448at2"/>
<dbReference type="Proteomes" id="UP000008183">
    <property type="component" value="Chromosome"/>
</dbReference>
<dbReference type="GO" id="GO:0005829">
    <property type="term" value="C:cytosol"/>
    <property type="evidence" value="ECO:0000318"/>
    <property type="project" value="GO_Central"/>
</dbReference>
<dbReference type="GO" id="GO:0005524">
    <property type="term" value="F:ATP binding"/>
    <property type="evidence" value="ECO:0007669"/>
    <property type="project" value="UniProtKB-UniRule"/>
</dbReference>
<dbReference type="GO" id="GO:0140664">
    <property type="term" value="F:ATP-dependent DNA damage sensor activity"/>
    <property type="evidence" value="ECO:0007669"/>
    <property type="project" value="InterPro"/>
</dbReference>
<dbReference type="GO" id="GO:0003684">
    <property type="term" value="F:damaged DNA binding"/>
    <property type="evidence" value="ECO:0007669"/>
    <property type="project" value="UniProtKB-UniRule"/>
</dbReference>
<dbReference type="GO" id="GO:0030983">
    <property type="term" value="F:mismatched DNA binding"/>
    <property type="evidence" value="ECO:0000318"/>
    <property type="project" value="GO_Central"/>
</dbReference>
<dbReference type="GO" id="GO:0006298">
    <property type="term" value="P:mismatch repair"/>
    <property type="evidence" value="ECO:0000318"/>
    <property type="project" value="GO_Central"/>
</dbReference>
<dbReference type="CDD" id="cd03284">
    <property type="entry name" value="ABC_MutS1"/>
    <property type="match status" value="1"/>
</dbReference>
<dbReference type="FunFam" id="1.10.1420.10:FF:000007">
    <property type="entry name" value="DNA mismatch repair protein MutS"/>
    <property type="match status" value="1"/>
</dbReference>
<dbReference type="FunFam" id="3.40.1170.10:FF:000001">
    <property type="entry name" value="DNA mismatch repair protein MutS"/>
    <property type="match status" value="1"/>
</dbReference>
<dbReference type="FunFam" id="3.40.50.300:FF:002984">
    <property type="entry name" value="DNA mismatch repair protein MutS 1"/>
    <property type="match status" value="1"/>
</dbReference>
<dbReference type="Gene3D" id="1.10.1420.10">
    <property type="match status" value="2"/>
</dbReference>
<dbReference type="Gene3D" id="3.40.1170.10">
    <property type="entry name" value="DNA repair protein MutS, domain I"/>
    <property type="match status" value="1"/>
</dbReference>
<dbReference type="Gene3D" id="3.30.420.110">
    <property type="entry name" value="MutS, connector domain"/>
    <property type="match status" value="1"/>
</dbReference>
<dbReference type="Gene3D" id="3.40.50.300">
    <property type="entry name" value="P-loop containing nucleotide triphosphate hydrolases"/>
    <property type="match status" value="1"/>
</dbReference>
<dbReference type="HAMAP" id="MF_00096">
    <property type="entry name" value="MutS"/>
    <property type="match status" value="1"/>
</dbReference>
<dbReference type="InterPro" id="IPR005748">
    <property type="entry name" value="DNA_mismatch_repair_MutS"/>
</dbReference>
<dbReference type="InterPro" id="IPR007695">
    <property type="entry name" value="DNA_mismatch_repair_MutS-lik_N"/>
</dbReference>
<dbReference type="InterPro" id="IPR017261">
    <property type="entry name" value="DNA_mismatch_repair_MutS/MSH"/>
</dbReference>
<dbReference type="InterPro" id="IPR000432">
    <property type="entry name" value="DNA_mismatch_repair_MutS_C"/>
</dbReference>
<dbReference type="InterPro" id="IPR007861">
    <property type="entry name" value="DNA_mismatch_repair_MutS_clamp"/>
</dbReference>
<dbReference type="InterPro" id="IPR007696">
    <property type="entry name" value="DNA_mismatch_repair_MutS_core"/>
</dbReference>
<dbReference type="InterPro" id="IPR016151">
    <property type="entry name" value="DNA_mismatch_repair_MutS_N"/>
</dbReference>
<dbReference type="InterPro" id="IPR036187">
    <property type="entry name" value="DNA_mismatch_repair_MutS_sf"/>
</dbReference>
<dbReference type="InterPro" id="IPR007860">
    <property type="entry name" value="DNA_mmatch_repair_MutS_con_dom"/>
</dbReference>
<dbReference type="InterPro" id="IPR045076">
    <property type="entry name" value="MutS"/>
</dbReference>
<dbReference type="InterPro" id="IPR036678">
    <property type="entry name" value="MutS_con_dom_sf"/>
</dbReference>
<dbReference type="InterPro" id="IPR027417">
    <property type="entry name" value="P-loop_NTPase"/>
</dbReference>
<dbReference type="NCBIfam" id="TIGR01070">
    <property type="entry name" value="mutS1"/>
    <property type="match status" value="1"/>
</dbReference>
<dbReference type="NCBIfam" id="NF003810">
    <property type="entry name" value="PRK05399.1"/>
    <property type="match status" value="1"/>
</dbReference>
<dbReference type="PANTHER" id="PTHR11361:SF34">
    <property type="entry name" value="DNA MISMATCH REPAIR PROTEIN MSH1, MITOCHONDRIAL"/>
    <property type="match status" value="1"/>
</dbReference>
<dbReference type="PANTHER" id="PTHR11361">
    <property type="entry name" value="DNA MISMATCH REPAIR PROTEIN MUTS FAMILY MEMBER"/>
    <property type="match status" value="1"/>
</dbReference>
<dbReference type="Pfam" id="PF01624">
    <property type="entry name" value="MutS_I"/>
    <property type="match status" value="1"/>
</dbReference>
<dbReference type="Pfam" id="PF05188">
    <property type="entry name" value="MutS_II"/>
    <property type="match status" value="1"/>
</dbReference>
<dbReference type="Pfam" id="PF05192">
    <property type="entry name" value="MutS_III"/>
    <property type="match status" value="1"/>
</dbReference>
<dbReference type="Pfam" id="PF05190">
    <property type="entry name" value="MutS_IV"/>
    <property type="match status" value="1"/>
</dbReference>
<dbReference type="Pfam" id="PF00488">
    <property type="entry name" value="MutS_V"/>
    <property type="match status" value="1"/>
</dbReference>
<dbReference type="PIRSF" id="PIRSF037677">
    <property type="entry name" value="DNA_mis_repair_Msh6"/>
    <property type="match status" value="1"/>
</dbReference>
<dbReference type="SMART" id="SM00534">
    <property type="entry name" value="MUTSac"/>
    <property type="match status" value="1"/>
</dbReference>
<dbReference type="SMART" id="SM00533">
    <property type="entry name" value="MUTSd"/>
    <property type="match status" value="1"/>
</dbReference>
<dbReference type="SUPFAM" id="SSF55271">
    <property type="entry name" value="DNA repair protein MutS, domain I"/>
    <property type="match status" value="1"/>
</dbReference>
<dbReference type="SUPFAM" id="SSF53150">
    <property type="entry name" value="DNA repair protein MutS, domain II"/>
    <property type="match status" value="1"/>
</dbReference>
<dbReference type="SUPFAM" id="SSF48334">
    <property type="entry name" value="DNA repair protein MutS, domain III"/>
    <property type="match status" value="1"/>
</dbReference>
<dbReference type="SUPFAM" id="SSF52540">
    <property type="entry name" value="P-loop containing nucleoside triphosphate hydrolases"/>
    <property type="match status" value="1"/>
</dbReference>
<dbReference type="PROSITE" id="PS00486">
    <property type="entry name" value="DNA_MISMATCH_REPAIR_2"/>
    <property type="match status" value="1"/>
</dbReference>
<proteinExistence type="inferred from homology"/>
<sequence length="793" mass="91066">MKVTPLMEQYLRIKEQYKDSILLFRLGDFYEAFFEDAKIVSKVLNIVLTRRQDAPMAGIPYHALNTYLKKLVEAGYKVAICDQMEEPSKSKKLIRREVTRVVTPGSIVEDEFLSETNNYMAVVSEEKGRYCTVFCDVSTGEVLVHESSDEQETLDLLKNYSISQIICPEHLKSSLKERFPGVYTETISEWYFSDLEEVEKAYNLKDIHHFELSPLALKALAALIKYVKYTMIAEDLNLKPPLLISQRDYMILDSATVENLSLIPGDRGKNLFDVLNNTETPMGARLLKKWILHPLVDRKQIEERLKAVERLVNDRVSLEEMRNLLSNVRDVERIVSRVEYNRSVPRDLVALRETLEIIPKLNEVLSTFGVFKKLAFPEGLVDLLRKAIEDDPVGSPGEGKVIKRGFSSELDEYRDLLEHAEERLKEFEEKERERTGIQKLRVGYNQVFGYYIEVTKANLDKIPDDYERKQTLVNSERFITPELKEFETKIMAAKERIEELEKELFKSVCEEVKKHKEVLLEISEDLAKIDALSTLAYDAIMYNYTKPVFSEDRLEIKGGRHPVVERFTQNFVENDIYMDNEKRFVVITGPNMSGKSTFIRQVGLISLMAQIGSFVPAQKAILPVFDRIFTRMGARDDLAGGRSTFLVEMNEMALILLKSTNKSLVLLDEVGRGTSTQDGVSIAWAISEELIKRGCKVLFATHFTELTELEKHFPQVQNKTILVKEEGKNVIFTHKVVDGVADRSYGIEVAKIAGIPDRVINRAYEILERNFKNNTKKNGKSNRFSQQIPLFPV</sequence>
<organism>
    <name type="scientific">Thermotoga maritima (strain ATCC 43589 / DSM 3109 / JCM 10099 / NBRC 100826 / MSB8)</name>
    <dbReference type="NCBI Taxonomy" id="243274"/>
    <lineage>
        <taxon>Bacteria</taxon>
        <taxon>Thermotogati</taxon>
        <taxon>Thermotogota</taxon>
        <taxon>Thermotogae</taxon>
        <taxon>Thermotogales</taxon>
        <taxon>Thermotogaceae</taxon>
        <taxon>Thermotoga</taxon>
    </lineage>
</organism>
<gene>
    <name type="primary">mutS</name>
    <name type="ordered locus">TM_1719</name>
</gene>
<keyword id="KW-0067">ATP-binding</keyword>
<keyword id="KW-0227">DNA damage</keyword>
<keyword id="KW-0234">DNA repair</keyword>
<keyword id="KW-0238">DNA-binding</keyword>
<keyword id="KW-0547">Nucleotide-binding</keyword>
<keyword id="KW-1185">Reference proteome</keyword>